<proteinExistence type="inferred from homology"/>
<accession>Q0T8E5</accession>
<sequence>MINSPRVCIQVQSVYIEAQSSPDNERYVFAYTVTIRNLGRAPVQLLGRYWLITNGNGRETEVQGEGVVGVQPLIAPGEEYQYTSGAIIETPLGTMQGHYEMIDENGVPFSIDIPVFRLAVPTLIH</sequence>
<name>APAG_SHIF8</name>
<dbReference type="EMBL" id="CP000266">
    <property type="protein sequence ID" value="ABF02331.1"/>
    <property type="molecule type" value="Genomic_DNA"/>
</dbReference>
<dbReference type="RefSeq" id="WP_000610901.1">
    <property type="nucleotide sequence ID" value="NC_008258.1"/>
</dbReference>
<dbReference type="SMR" id="Q0T8E5"/>
<dbReference type="GeneID" id="93777385"/>
<dbReference type="KEGG" id="sfv:SFV_0044"/>
<dbReference type="HOGENOM" id="CLU_128074_0_0_6"/>
<dbReference type="Proteomes" id="UP000000659">
    <property type="component" value="Chromosome"/>
</dbReference>
<dbReference type="GO" id="GO:0070987">
    <property type="term" value="P:error-free translesion synthesis"/>
    <property type="evidence" value="ECO:0007669"/>
    <property type="project" value="TreeGrafter"/>
</dbReference>
<dbReference type="Gene3D" id="2.60.40.1470">
    <property type="entry name" value="ApaG domain"/>
    <property type="match status" value="1"/>
</dbReference>
<dbReference type="HAMAP" id="MF_00791">
    <property type="entry name" value="ApaG"/>
    <property type="match status" value="1"/>
</dbReference>
<dbReference type="InterPro" id="IPR007474">
    <property type="entry name" value="ApaG_domain"/>
</dbReference>
<dbReference type="InterPro" id="IPR036767">
    <property type="entry name" value="ApaG_sf"/>
</dbReference>
<dbReference type="InterPro" id="IPR023065">
    <property type="entry name" value="Uncharacterised_ApaG"/>
</dbReference>
<dbReference type="NCBIfam" id="NF003967">
    <property type="entry name" value="PRK05461.1"/>
    <property type="match status" value="1"/>
</dbReference>
<dbReference type="PANTHER" id="PTHR14289">
    <property type="entry name" value="F-BOX ONLY PROTEIN 3"/>
    <property type="match status" value="1"/>
</dbReference>
<dbReference type="PANTHER" id="PTHR14289:SF16">
    <property type="entry name" value="POLYMERASE DELTA-INTERACTING PROTEIN 2"/>
    <property type="match status" value="1"/>
</dbReference>
<dbReference type="Pfam" id="PF04379">
    <property type="entry name" value="DUF525"/>
    <property type="match status" value="1"/>
</dbReference>
<dbReference type="SUPFAM" id="SSF110069">
    <property type="entry name" value="ApaG-like"/>
    <property type="match status" value="1"/>
</dbReference>
<dbReference type="PROSITE" id="PS51087">
    <property type="entry name" value="APAG"/>
    <property type="match status" value="1"/>
</dbReference>
<evidence type="ECO:0000255" key="1">
    <source>
        <dbReference type="HAMAP-Rule" id="MF_00791"/>
    </source>
</evidence>
<protein>
    <recommendedName>
        <fullName evidence="1">Protein ApaG</fullName>
    </recommendedName>
</protein>
<reference key="1">
    <citation type="journal article" date="2006" name="BMC Genomics">
        <title>Complete genome sequence of Shigella flexneri 5b and comparison with Shigella flexneri 2a.</title>
        <authorList>
            <person name="Nie H."/>
            <person name="Yang F."/>
            <person name="Zhang X."/>
            <person name="Yang J."/>
            <person name="Chen L."/>
            <person name="Wang J."/>
            <person name="Xiong Z."/>
            <person name="Peng J."/>
            <person name="Sun L."/>
            <person name="Dong J."/>
            <person name="Xue Y."/>
            <person name="Xu X."/>
            <person name="Chen S."/>
            <person name="Yao Z."/>
            <person name="Shen Y."/>
            <person name="Jin Q."/>
        </authorList>
    </citation>
    <scope>NUCLEOTIDE SEQUENCE [LARGE SCALE GENOMIC DNA]</scope>
    <source>
        <strain>8401</strain>
    </source>
</reference>
<feature type="chain" id="PRO_1000083661" description="Protein ApaG">
    <location>
        <begin position="1"/>
        <end position="125"/>
    </location>
</feature>
<feature type="domain" description="ApaG" evidence="1">
    <location>
        <begin position="1"/>
        <end position="125"/>
    </location>
</feature>
<gene>
    <name evidence="1" type="primary">apaG</name>
    <name type="ordered locus">SFV_0044</name>
</gene>
<organism>
    <name type="scientific">Shigella flexneri serotype 5b (strain 8401)</name>
    <dbReference type="NCBI Taxonomy" id="373384"/>
    <lineage>
        <taxon>Bacteria</taxon>
        <taxon>Pseudomonadati</taxon>
        <taxon>Pseudomonadota</taxon>
        <taxon>Gammaproteobacteria</taxon>
        <taxon>Enterobacterales</taxon>
        <taxon>Enterobacteriaceae</taxon>
        <taxon>Shigella</taxon>
    </lineage>
</organism>